<dbReference type="EMBL" id="X60281">
    <property type="protein sequence ID" value="CAA42820.1"/>
    <property type="molecule type" value="mRNA"/>
</dbReference>
<dbReference type="PIR" id="S18598">
    <property type="entry name" value="S18598"/>
</dbReference>
<dbReference type="RefSeq" id="NP_001392200.1">
    <property type="nucleotide sequence ID" value="NM_001405271.1"/>
</dbReference>
<dbReference type="RefSeq" id="XP_016481278.1">
    <property type="nucleotide sequence ID" value="XM_016625792.1"/>
</dbReference>
<dbReference type="SMR" id="P29062"/>
<dbReference type="STRING" id="4097.P29062"/>
<dbReference type="PaxDb" id="4097-P29062"/>
<dbReference type="GeneID" id="107802320"/>
<dbReference type="KEGG" id="nta:107802320"/>
<dbReference type="OMA" id="HAQGHLM"/>
<dbReference type="OrthoDB" id="5985073at2759"/>
<dbReference type="PhylomeDB" id="P29062"/>
<dbReference type="Proteomes" id="UP000084051">
    <property type="component" value="Unplaced"/>
</dbReference>
<dbReference type="GO" id="GO:0005576">
    <property type="term" value="C:extracellular region"/>
    <property type="evidence" value="ECO:0007669"/>
    <property type="project" value="UniProtKB-KW"/>
</dbReference>
<dbReference type="GO" id="GO:0004540">
    <property type="term" value="F:RNA nuclease activity"/>
    <property type="evidence" value="ECO:0007669"/>
    <property type="project" value="InterPro"/>
</dbReference>
<dbReference type="GO" id="GO:0042742">
    <property type="term" value="P:defense response to bacterium"/>
    <property type="evidence" value="ECO:0007669"/>
    <property type="project" value="InterPro"/>
</dbReference>
<dbReference type="GO" id="GO:0050832">
    <property type="term" value="P:defense response to fungus"/>
    <property type="evidence" value="ECO:0007669"/>
    <property type="project" value="InterPro"/>
</dbReference>
<dbReference type="CDD" id="cd22777">
    <property type="entry name" value="DPBB_barwin-like"/>
    <property type="match status" value="1"/>
</dbReference>
<dbReference type="FunFam" id="2.40.40.10:FF:000007">
    <property type="entry name" value="Papaya barwin-like protein"/>
    <property type="match status" value="1"/>
</dbReference>
<dbReference type="Gene3D" id="2.40.40.10">
    <property type="entry name" value="RlpA-like domain"/>
    <property type="match status" value="1"/>
</dbReference>
<dbReference type="InterPro" id="IPR018226">
    <property type="entry name" value="Barwin_CS"/>
</dbReference>
<dbReference type="InterPro" id="IPR001153">
    <property type="entry name" value="Barwin_dom"/>
</dbReference>
<dbReference type="InterPro" id="IPR044301">
    <property type="entry name" value="PR4"/>
</dbReference>
<dbReference type="InterPro" id="IPR036908">
    <property type="entry name" value="RlpA-like_sf"/>
</dbReference>
<dbReference type="PANTHER" id="PTHR46351:SF6">
    <property type="entry name" value="PATHOGENESIS-RELATED PROTEIN PR-4A"/>
    <property type="match status" value="1"/>
</dbReference>
<dbReference type="PANTHER" id="PTHR46351">
    <property type="entry name" value="WOUND-INDUCED PROTEIN WIN2"/>
    <property type="match status" value="1"/>
</dbReference>
<dbReference type="Pfam" id="PF00967">
    <property type="entry name" value="Barwin"/>
    <property type="match status" value="1"/>
</dbReference>
<dbReference type="PRINTS" id="PR00602">
    <property type="entry name" value="BARWIN"/>
</dbReference>
<dbReference type="SUPFAM" id="SSF50685">
    <property type="entry name" value="Barwin-like endoglucanases"/>
    <property type="match status" value="1"/>
</dbReference>
<dbReference type="PROSITE" id="PS00771">
    <property type="entry name" value="BARWIN_1"/>
    <property type="match status" value="1"/>
</dbReference>
<dbReference type="PROSITE" id="PS00772">
    <property type="entry name" value="BARWIN_2"/>
    <property type="match status" value="1"/>
</dbReference>
<dbReference type="PROSITE" id="PS51174">
    <property type="entry name" value="BARWIN_3"/>
    <property type="match status" value="1"/>
</dbReference>
<organism>
    <name type="scientific">Nicotiana tabacum</name>
    <name type="common">Common tobacco</name>
    <dbReference type="NCBI Taxonomy" id="4097"/>
    <lineage>
        <taxon>Eukaryota</taxon>
        <taxon>Viridiplantae</taxon>
        <taxon>Streptophyta</taxon>
        <taxon>Embryophyta</taxon>
        <taxon>Tracheophyta</taxon>
        <taxon>Spermatophyta</taxon>
        <taxon>Magnoliopsida</taxon>
        <taxon>eudicotyledons</taxon>
        <taxon>Gunneridae</taxon>
        <taxon>Pentapetalae</taxon>
        <taxon>asterids</taxon>
        <taxon>lamiids</taxon>
        <taxon>Solanales</taxon>
        <taxon>Solanaceae</taxon>
        <taxon>Nicotianoideae</taxon>
        <taxon>Nicotianeae</taxon>
        <taxon>Nicotiana</taxon>
    </lineage>
</organism>
<sequence>MERVNNYKLCVALLIISMVMAMAAAQSATNVRSTYHLYNPQNINWDLRAASAFCATWDADKPLAWRQKYGWTAFCGPAGPRGQDSCGRCLRVTNTGTGTQTTVRIVDQCSNGGLDLDVNVFNQLDTNGVGYQQGHLTVNYEFVNCND</sequence>
<keyword id="KW-0134">Cell wall</keyword>
<keyword id="KW-1015">Disulfide bond</keyword>
<keyword id="KW-0568">Pathogenesis-related protein</keyword>
<keyword id="KW-0611">Plant defense</keyword>
<keyword id="KW-1185">Reference proteome</keyword>
<keyword id="KW-0964">Secreted</keyword>
<keyword id="KW-0732">Signal</keyword>
<comment type="subcellular location">
    <subcellularLocation>
        <location evidence="1">Secreted</location>
        <location evidence="1">Cell wall</location>
    </subcellularLocation>
</comment>
<comment type="induction">
    <text>By TMV infection.</text>
</comment>
<evidence type="ECO:0000250" key="1"/>
<evidence type="ECO:0000255" key="2"/>
<evidence type="ECO:0000255" key="3">
    <source>
        <dbReference type="PROSITE-ProRule" id="PRU00527"/>
    </source>
</evidence>
<accession>P29062</accession>
<reference key="1">
    <citation type="journal article" date="1991" name="Mol. Gen. Genet.">
        <title>Pathogenesis-related protein 4 is structurally homologous to the carboxy-terminal domains of hevein, Win-1 and Win-2.</title>
        <authorList>
            <person name="Friedrich L."/>
            <person name="Moyer M."/>
            <person name="Ward E."/>
            <person name="Ryals J."/>
        </authorList>
    </citation>
    <scope>NUCLEOTIDE SEQUENCE [MRNA]</scope>
    <source>
        <strain>cv. Xanthi</strain>
        <tissue>Leaf</tissue>
    </source>
</reference>
<protein>
    <recommendedName>
        <fullName>Pathogenesis-related protein PR-4A</fullName>
    </recommendedName>
</protein>
<proteinExistence type="evidence at transcript level"/>
<name>PR4A_TOBAC</name>
<feature type="signal peptide" evidence="2">
    <location>
        <begin position="1"/>
        <end position="25"/>
    </location>
</feature>
<feature type="chain" id="PRO_0000002791" description="Pathogenesis-related protein PR-4A">
    <location>
        <begin position="26"/>
        <end position="147"/>
    </location>
</feature>
<feature type="domain" description="Barwin" evidence="3">
    <location>
        <begin position="26"/>
        <end position="147"/>
    </location>
</feature>
<feature type="disulfide bond" evidence="1">
    <location>
        <begin position="54"/>
        <end position="86"/>
    </location>
</feature>
<feature type="disulfide bond" evidence="1">
    <location>
        <begin position="75"/>
        <end position="109"/>
    </location>
</feature>
<feature type="disulfide bond" evidence="1">
    <location>
        <begin position="89"/>
        <end position="145"/>
    </location>
</feature>